<name>AMMR1_PONAB</name>
<keyword id="KW-0539">Nucleus</keyword>
<keyword id="KW-0597">Phosphoprotein</keyword>
<keyword id="KW-1185">Reference proteome</keyword>
<gene>
    <name type="primary">AMMECR1</name>
</gene>
<organism>
    <name type="scientific">Pongo abelii</name>
    <name type="common">Sumatran orangutan</name>
    <name type="synonym">Pongo pygmaeus abelii</name>
    <dbReference type="NCBI Taxonomy" id="9601"/>
    <lineage>
        <taxon>Eukaryota</taxon>
        <taxon>Metazoa</taxon>
        <taxon>Chordata</taxon>
        <taxon>Craniata</taxon>
        <taxon>Vertebrata</taxon>
        <taxon>Euteleostomi</taxon>
        <taxon>Mammalia</taxon>
        <taxon>Eutheria</taxon>
        <taxon>Euarchontoglires</taxon>
        <taxon>Primates</taxon>
        <taxon>Haplorrhini</taxon>
        <taxon>Catarrhini</taxon>
        <taxon>Hominidae</taxon>
        <taxon>Pongo</taxon>
    </lineage>
</organism>
<protein>
    <recommendedName>
        <fullName evidence="4">Nuclear protein AMMECR1</fullName>
    </recommendedName>
    <alternativeName>
        <fullName>AMME syndrome candidate gene 1 protein homolog</fullName>
    </alternativeName>
</protein>
<proteinExistence type="evidence at transcript level"/>
<comment type="subcellular location">
    <subcellularLocation>
        <location evidence="1">Nucleus</location>
    </subcellularLocation>
</comment>
<evidence type="ECO:0000250" key="1">
    <source>
        <dbReference type="UniProtKB" id="Q9Y4X0"/>
    </source>
</evidence>
<evidence type="ECO:0000255" key="2">
    <source>
        <dbReference type="PROSITE-ProRule" id="PRU00467"/>
    </source>
</evidence>
<evidence type="ECO:0000256" key="3">
    <source>
        <dbReference type="SAM" id="MobiDB-lite"/>
    </source>
</evidence>
<evidence type="ECO:0000305" key="4"/>
<sequence length="333" mass="35521">MAAGCCGVKKQKLSSSPPSGSGGGGDASSSSHCSGESQCRAGELGLGGAGTRLNGLGGLTGGGSGSGCTLSPPQGCGGGGGGIALSPPPSCGVGTLLSTPAAATSSSPSSSSAASSSSPGSRKMVVSAEMCCFCFDVLYCHLYGYQQPRTPRFTNEPYPLFVTWKIGRDKRLRGCIGTFSAMNLHSGLREYTLTSALKDSRFPPMTRDELPRLFCSVSLLTNFEDVCDYLDWEVGVHGIRIEFINEKGSKRTATYLPEVAKEQGWDHIQTIDSLLRKGGYKAPITNEFRKTIKLTRYRSEKMTLSYAEYLAHRQHHHFQNGIGHPLPPYNHYS</sequence>
<dbReference type="EMBL" id="CR858935">
    <property type="protein sequence ID" value="CAH91133.1"/>
    <property type="molecule type" value="mRNA"/>
</dbReference>
<dbReference type="RefSeq" id="NP_001128965.1">
    <property type="nucleotide sequence ID" value="NM_001135493.1"/>
</dbReference>
<dbReference type="SMR" id="Q5RAS7"/>
<dbReference type="FunCoup" id="Q5RAS7">
    <property type="interactions" value="2924"/>
</dbReference>
<dbReference type="STRING" id="9601.ENSPPYP00000023093"/>
<dbReference type="GeneID" id="100190805"/>
<dbReference type="KEGG" id="pon:100190805"/>
<dbReference type="CTD" id="9949"/>
<dbReference type="eggNOG" id="KOG3274">
    <property type="taxonomic scope" value="Eukaryota"/>
</dbReference>
<dbReference type="HOGENOM" id="CLU_052828_1_0_1"/>
<dbReference type="InParanoid" id="Q5RAS7"/>
<dbReference type="OrthoDB" id="24630at2759"/>
<dbReference type="Proteomes" id="UP000001595">
    <property type="component" value="Unplaced"/>
</dbReference>
<dbReference type="GO" id="GO:0005634">
    <property type="term" value="C:nucleus"/>
    <property type="evidence" value="ECO:0000250"/>
    <property type="project" value="UniProtKB"/>
</dbReference>
<dbReference type="FunFam" id="3.30.700.20:FF:000001">
    <property type="entry name" value="AMME syndrome candidate gene 1"/>
    <property type="match status" value="1"/>
</dbReference>
<dbReference type="Gene3D" id="3.30.700.20">
    <property type="entry name" value="Hypothetical protein ph0010, domain 1"/>
    <property type="match status" value="1"/>
</dbReference>
<dbReference type="InterPro" id="IPR023473">
    <property type="entry name" value="AMMECR1"/>
</dbReference>
<dbReference type="InterPro" id="IPR036071">
    <property type="entry name" value="AMMECR1_dom_sf"/>
</dbReference>
<dbReference type="InterPro" id="IPR002733">
    <property type="entry name" value="AMMECR1_domain"/>
</dbReference>
<dbReference type="InterPro" id="IPR027485">
    <property type="entry name" value="AMMECR1_N"/>
</dbReference>
<dbReference type="NCBIfam" id="TIGR00296">
    <property type="entry name" value="TIGR00296 family protein"/>
    <property type="match status" value="1"/>
</dbReference>
<dbReference type="PANTHER" id="PTHR13016">
    <property type="entry name" value="AMMECR1 HOMOLOG"/>
    <property type="match status" value="1"/>
</dbReference>
<dbReference type="PANTHER" id="PTHR13016:SF2">
    <property type="entry name" value="NUCLEAR PROTEIN AMMECR1"/>
    <property type="match status" value="1"/>
</dbReference>
<dbReference type="Pfam" id="PF01871">
    <property type="entry name" value="AMMECR1"/>
    <property type="match status" value="1"/>
</dbReference>
<dbReference type="SUPFAM" id="SSF143447">
    <property type="entry name" value="AMMECR1-like"/>
    <property type="match status" value="1"/>
</dbReference>
<dbReference type="PROSITE" id="PS51112">
    <property type="entry name" value="AMMECR1"/>
    <property type="match status" value="1"/>
</dbReference>
<accession>Q5RAS7</accession>
<reference key="1">
    <citation type="submission" date="2004-11" db="EMBL/GenBank/DDBJ databases">
        <authorList>
            <consortium name="The German cDNA consortium"/>
        </authorList>
    </citation>
    <scope>NUCLEOTIDE SEQUENCE [LARGE SCALE MRNA]</scope>
    <source>
        <tissue>Kidney</tissue>
    </source>
</reference>
<feature type="chain" id="PRO_0000278478" description="Nuclear protein AMMECR1">
    <location>
        <begin position="1"/>
        <end position="333"/>
    </location>
</feature>
<feature type="domain" description="AMMECR1" evidence="2">
    <location>
        <begin position="119"/>
        <end position="313"/>
    </location>
</feature>
<feature type="region of interest" description="Disordered" evidence="3">
    <location>
        <begin position="1"/>
        <end position="39"/>
    </location>
</feature>
<feature type="region of interest" description="Disordered" evidence="3">
    <location>
        <begin position="101"/>
        <end position="120"/>
    </location>
</feature>
<feature type="compositionally biased region" description="Low complexity" evidence="3">
    <location>
        <begin position="27"/>
        <end position="37"/>
    </location>
</feature>
<feature type="compositionally biased region" description="Low complexity" evidence="3">
    <location>
        <begin position="101"/>
        <end position="119"/>
    </location>
</feature>
<feature type="modified residue" description="Phosphoserine" evidence="1">
    <location>
        <position position="16"/>
    </location>
</feature>